<protein>
    <recommendedName>
        <fullName evidence="2">Phosphoglycerate kinase</fullName>
        <ecNumber evidence="2">2.7.2.3</ecNumber>
    </recommendedName>
</protein>
<keyword id="KW-0067">ATP-binding</keyword>
<keyword id="KW-0963">Cytoplasm</keyword>
<keyword id="KW-0324">Glycolysis</keyword>
<keyword id="KW-0418">Kinase</keyword>
<keyword id="KW-0547">Nucleotide-binding</keyword>
<keyword id="KW-0808">Transferase</keyword>
<gene>
    <name evidence="2" type="primary">pgk</name>
    <name type="ordered locus">SpyM3_1624</name>
</gene>
<organism>
    <name type="scientific">Streptococcus pyogenes serotype M3 (strain ATCC BAA-595 / MGAS315)</name>
    <dbReference type="NCBI Taxonomy" id="198466"/>
    <lineage>
        <taxon>Bacteria</taxon>
        <taxon>Bacillati</taxon>
        <taxon>Bacillota</taxon>
        <taxon>Bacilli</taxon>
        <taxon>Lactobacillales</taxon>
        <taxon>Streptococcaceae</taxon>
        <taxon>Streptococcus</taxon>
    </lineage>
</organism>
<comment type="catalytic activity">
    <reaction evidence="2">
        <text>(2R)-3-phosphoglycerate + ATP = (2R)-3-phospho-glyceroyl phosphate + ADP</text>
        <dbReference type="Rhea" id="RHEA:14801"/>
        <dbReference type="ChEBI" id="CHEBI:30616"/>
        <dbReference type="ChEBI" id="CHEBI:57604"/>
        <dbReference type="ChEBI" id="CHEBI:58272"/>
        <dbReference type="ChEBI" id="CHEBI:456216"/>
        <dbReference type="EC" id="2.7.2.3"/>
    </reaction>
</comment>
<comment type="pathway">
    <text evidence="2">Carbohydrate degradation; glycolysis; pyruvate from D-glyceraldehyde 3-phosphate: step 2/5.</text>
</comment>
<comment type="subunit">
    <text evidence="2">Monomer.</text>
</comment>
<comment type="subcellular location">
    <subcellularLocation>
        <location evidence="2">Cytoplasm</location>
    </subcellularLocation>
</comment>
<comment type="similarity">
    <text evidence="2">Belongs to the phosphoglycerate kinase family.</text>
</comment>
<dbReference type="EC" id="2.7.2.3" evidence="2"/>
<dbReference type="EMBL" id="AE014074">
    <property type="protein sequence ID" value="AAM80231.1"/>
    <property type="molecule type" value="Genomic_DNA"/>
</dbReference>
<dbReference type="RefSeq" id="WP_011054985.1">
    <property type="nucleotide sequence ID" value="NC_004070.1"/>
</dbReference>
<dbReference type="SMR" id="P0DD04"/>
<dbReference type="KEGG" id="spg:SpyM3_1624"/>
<dbReference type="HOGENOM" id="CLU_025427_0_1_9"/>
<dbReference type="UniPathway" id="UPA00109">
    <property type="reaction ID" value="UER00185"/>
</dbReference>
<dbReference type="Proteomes" id="UP000000564">
    <property type="component" value="Chromosome"/>
</dbReference>
<dbReference type="GO" id="GO:0005829">
    <property type="term" value="C:cytosol"/>
    <property type="evidence" value="ECO:0007669"/>
    <property type="project" value="TreeGrafter"/>
</dbReference>
<dbReference type="GO" id="GO:0043531">
    <property type="term" value="F:ADP binding"/>
    <property type="evidence" value="ECO:0007669"/>
    <property type="project" value="TreeGrafter"/>
</dbReference>
<dbReference type="GO" id="GO:0005524">
    <property type="term" value="F:ATP binding"/>
    <property type="evidence" value="ECO:0007669"/>
    <property type="project" value="UniProtKB-KW"/>
</dbReference>
<dbReference type="GO" id="GO:0004618">
    <property type="term" value="F:phosphoglycerate kinase activity"/>
    <property type="evidence" value="ECO:0007669"/>
    <property type="project" value="UniProtKB-UniRule"/>
</dbReference>
<dbReference type="GO" id="GO:0006094">
    <property type="term" value="P:gluconeogenesis"/>
    <property type="evidence" value="ECO:0007669"/>
    <property type="project" value="TreeGrafter"/>
</dbReference>
<dbReference type="GO" id="GO:0006096">
    <property type="term" value="P:glycolytic process"/>
    <property type="evidence" value="ECO:0007669"/>
    <property type="project" value="UniProtKB-UniRule"/>
</dbReference>
<dbReference type="FunFam" id="3.40.50.1260:FF:000001">
    <property type="entry name" value="Phosphoglycerate kinase"/>
    <property type="match status" value="1"/>
</dbReference>
<dbReference type="FunFam" id="3.40.50.1260:FF:000008">
    <property type="entry name" value="Phosphoglycerate kinase"/>
    <property type="match status" value="1"/>
</dbReference>
<dbReference type="Gene3D" id="3.40.50.1260">
    <property type="entry name" value="Phosphoglycerate kinase, N-terminal domain"/>
    <property type="match status" value="2"/>
</dbReference>
<dbReference type="HAMAP" id="MF_00145">
    <property type="entry name" value="Phosphoglyc_kinase"/>
    <property type="match status" value="1"/>
</dbReference>
<dbReference type="InterPro" id="IPR001576">
    <property type="entry name" value="Phosphoglycerate_kinase"/>
</dbReference>
<dbReference type="InterPro" id="IPR015911">
    <property type="entry name" value="Phosphoglycerate_kinase_CS"/>
</dbReference>
<dbReference type="InterPro" id="IPR015824">
    <property type="entry name" value="Phosphoglycerate_kinase_N"/>
</dbReference>
<dbReference type="InterPro" id="IPR036043">
    <property type="entry name" value="Phosphoglycerate_kinase_sf"/>
</dbReference>
<dbReference type="PANTHER" id="PTHR11406">
    <property type="entry name" value="PHOSPHOGLYCERATE KINASE"/>
    <property type="match status" value="1"/>
</dbReference>
<dbReference type="PANTHER" id="PTHR11406:SF23">
    <property type="entry name" value="PHOSPHOGLYCERATE KINASE 1, CHLOROPLASTIC-RELATED"/>
    <property type="match status" value="1"/>
</dbReference>
<dbReference type="Pfam" id="PF00162">
    <property type="entry name" value="PGK"/>
    <property type="match status" value="1"/>
</dbReference>
<dbReference type="PIRSF" id="PIRSF000724">
    <property type="entry name" value="Pgk"/>
    <property type="match status" value="1"/>
</dbReference>
<dbReference type="PRINTS" id="PR00477">
    <property type="entry name" value="PHGLYCKINASE"/>
</dbReference>
<dbReference type="SUPFAM" id="SSF53748">
    <property type="entry name" value="Phosphoglycerate kinase"/>
    <property type="match status" value="1"/>
</dbReference>
<dbReference type="PROSITE" id="PS00111">
    <property type="entry name" value="PGLYCERATE_KINASE"/>
    <property type="match status" value="1"/>
</dbReference>
<evidence type="ECO:0000250" key="1"/>
<evidence type="ECO:0000255" key="2">
    <source>
        <dbReference type="HAMAP-Rule" id="MF_00145"/>
    </source>
</evidence>
<reference key="1">
    <citation type="journal article" date="2002" name="Proc. Natl. Acad. Sci. U.S.A.">
        <title>Genome sequence of a serotype M3 strain of group A Streptococcus: phage-encoded toxins, the high-virulence phenotype, and clone emergence.</title>
        <authorList>
            <person name="Beres S.B."/>
            <person name="Sylva G.L."/>
            <person name="Barbian K.D."/>
            <person name="Lei B."/>
            <person name="Hoff J.S."/>
            <person name="Mammarella N.D."/>
            <person name="Liu M.-Y."/>
            <person name="Smoot J.C."/>
            <person name="Porcella S.F."/>
            <person name="Parkins L.D."/>
            <person name="Campbell D.S."/>
            <person name="Smith T.M."/>
            <person name="McCormick J.K."/>
            <person name="Leung D.Y.M."/>
            <person name="Schlievert P.M."/>
            <person name="Musser J.M."/>
        </authorList>
    </citation>
    <scope>NUCLEOTIDE SEQUENCE [LARGE SCALE GENOMIC DNA]</scope>
    <source>
        <strain>ATCC BAA-595 / MGAS315</strain>
    </source>
</reference>
<accession>P0DD04</accession>
<accession>Q8K5W7</accession>
<proteinExistence type="inferred from homology"/>
<name>PGK_STRP3</name>
<sequence length="398" mass="42130">MAKLTVKDVDLKGKKVLVRVDFNVPLKDGVITNDNRITAALPTIKYIIEQGGRAILFSHLGRVKEEADKEGKSLAPVAADLAAKLGQDVVFPGVTRGSKLEEAINALEDGQVLLVENTRFEDVDGKKESKNDEELGKYWASLGDGIFVNDAFGTAHRAHASNVGISANVEKAVAGFLLENEIAYIQEAVETPERPFVAILGGSKVSDKIGVIENLLEKADKVLIGGGMTYTFYKAQGIEIGNSLVEEDKLDVAKDLLEKSNGKLILPVDSKEANAFAGYTEVRDTEGEAVSEGFLGLDIGPKSIAKFDEALTGAKTVVWNGPMGVFENPDFQAGTIGVMDAIVKQPGVKSIIGGGDSAAAAINLGRADKFSWISTGGGASMELLEGKVLPGLAALTEK</sequence>
<feature type="initiator methionine" description="Removed" evidence="1">
    <location>
        <position position="1"/>
    </location>
</feature>
<feature type="chain" id="PRO_0000146018" description="Phosphoglycerate kinase">
    <location>
        <begin position="2"/>
        <end position="398"/>
    </location>
</feature>
<feature type="binding site" evidence="2">
    <location>
        <begin position="21"/>
        <end position="23"/>
    </location>
    <ligand>
        <name>substrate</name>
    </ligand>
</feature>
<feature type="binding site" evidence="2">
    <location>
        <position position="36"/>
    </location>
    <ligand>
        <name>substrate</name>
    </ligand>
</feature>
<feature type="binding site" evidence="2">
    <location>
        <begin position="59"/>
        <end position="62"/>
    </location>
    <ligand>
        <name>substrate</name>
    </ligand>
</feature>
<feature type="binding site" evidence="2">
    <location>
        <position position="119"/>
    </location>
    <ligand>
        <name>substrate</name>
    </ligand>
</feature>
<feature type="binding site" evidence="2">
    <location>
        <position position="157"/>
    </location>
    <ligand>
        <name>substrate</name>
    </ligand>
</feature>
<feature type="binding site" evidence="2">
    <location>
        <position position="208"/>
    </location>
    <ligand>
        <name>ATP</name>
        <dbReference type="ChEBI" id="CHEBI:30616"/>
    </ligand>
</feature>
<feature type="binding site" evidence="2">
    <location>
        <position position="296"/>
    </location>
    <ligand>
        <name>ATP</name>
        <dbReference type="ChEBI" id="CHEBI:30616"/>
    </ligand>
</feature>
<feature type="binding site" evidence="2">
    <location>
        <position position="327"/>
    </location>
    <ligand>
        <name>ATP</name>
        <dbReference type="ChEBI" id="CHEBI:30616"/>
    </ligand>
</feature>
<feature type="binding site" evidence="2">
    <location>
        <begin position="354"/>
        <end position="357"/>
    </location>
    <ligand>
        <name>ATP</name>
        <dbReference type="ChEBI" id="CHEBI:30616"/>
    </ligand>
</feature>